<reference key="1">
    <citation type="journal article" date="2003" name="Plant Physiol.">
        <title>The ATP-binding cassette transporters: structure, function, and gene family comparison between rice and Arabidopsis.</title>
        <authorList>
            <person name="Jasinski M."/>
            <person name="Ducos E."/>
            <person name="Martinoia E."/>
            <person name="Boutry M."/>
        </authorList>
    </citation>
    <scope>NUCLEOTIDE SEQUENCE [GENOMIC DNA]</scope>
    <source>
        <strain>cv. Nipponbare</strain>
    </source>
</reference>
<reference key="2">
    <citation type="journal article" date="2005" name="Nature">
        <title>The map-based sequence of the rice genome.</title>
        <authorList>
            <consortium name="International rice genome sequencing project (IRGSP)"/>
        </authorList>
    </citation>
    <scope>NUCLEOTIDE SEQUENCE [LARGE SCALE GENOMIC DNA]</scope>
    <source>
        <strain>cv. Nipponbare</strain>
    </source>
</reference>
<reference key="3">
    <citation type="journal article" date="2008" name="Nucleic Acids Res.">
        <title>The rice annotation project database (RAP-DB): 2008 update.</title>
        <authorList>
            <consortium name="The rice annotation project (RAP)"/>
        </authorList>
    </citation>
    <scope>GENOME REANNOTATION</scope>
    <source>
        <strain>cv. Nipponbare</strain>
    </source>
</reference>
<reference key="4">
    <citation type="journal article" date="2013" name="Rice">
        <title>Improvement of the Oryza sativa Nipponbare reference genome using next generation sequence and optical map data.</title>
        <authorList>
            <person name="Kawahara Y."/>
            <person name="de la Bastide M."/>
            <person name="Hamilton J.P."/>
            <person name="Kanamori H."/>
            <person name="McCombie W.R."/>
            <person name="Ouyang S."/>
            <person name="Schwartz D.C."/>
            <person name="Tanaka T."/>
            <person name="Wu J."/>
            <person name="Zhou S."/>
            <person name="Childs K.L."/>
            <person name="Davidson R.M."/>
            <person name="Lin H."/>
            <person name="Quesada-Ocampo L."/>
            <person name="Vaillancourt B."/>
            <person name="Sakai H."/>
            <person name="Lee S.S."/>
            <person name="Kim J."/>
            <person name="Numa H."/>
            <person name="Itoh T."/>
            <person name="Buell C.R."/>
            <person name="Matsumoto T."/>
        </authorList>
    </citation>
    <scope>GENOME REANNOTATION</scope>
    <source>
        <strain>cv. Nipponbare</strain>
    </source>
</reference>
<reference key="5">
    <citation type="journal article" date="2006" name="FEBS Lett.">
        <title>Organization and function of the plant pleiotropic drug resistance ABC transporter family.</title>
        <authorList>
            <person name="Crouzet J."/>
            <person name="Trombik T."/>
            <person name="Fraysse A.S."/>
            <person name="Boutry M."/>
        </authorList>
    </citation>
    <scope>GENE FAMILY</scope>
    <scope>NOMENCLATURE</scope>
</reference>
<reference key="6">
    <citation type="journal article" date="2008" name="Trends Plant Sci.">
        <title>Plant ABC proteins - a unified nomenclature and updated inventory.</title>
        <authorList>
            <person name="Verrier P.J."/>
            <person name="Bird D."/>
            <person name="Burla B."/>
            <person name="Dassa E."/>
            <person name="Forestier C."/>
            <person name="Geisler M."/>
            <person name="Klein M."/>
            <person name="Kolukisaoglu H.U."/>
            <person name="Lee Y."/>
            <person name="Martinoia E."/>
            <person name="Murphy A."/>
            <person name="Rea P.A."/>
            <person name="Samuels L."/>
            <person name="Schulz B."/>
            <person name="Spalding E.J."/>
            <person name="Yazaki K."/>
            <person name="Theodoulou F.L."/>
        </authorList>
    </citation>
    <scope>GENE FAMILY</scope>
    <scope>NOMENCLATURE</scope>
</reference>
<comment type="function">
    <text evidence="1">May be a general defense protein.</text>
</comment>
<comment type="subcellular location">
    <subcellularLocation>
        <location evidence="2">Membrane</location>
        <topology evidence="2">Multi-pass membrane protein</topology>
    </subcellularLocation>
</comment>
<comment type="similarity">
    <text evidence="8">Belongs to the ABC transporter superfamily. ABCG family. PDR (TC 3.A.1.205) subfamily.</text>
</comment>
<comment type="sequence caution" evidence="8">
    <conflict type="erroneous gene model prediction">
        <sequence resource="EMBL-CDS" id="BAF08173"/>
    </conflict>
</comment>
<proteinExistence type="inferred from homology"/>
<gene>
    <name evidence="7" type="primary">ABCG39</name>
    <name evidence="5 6" type="synonym">PDR7</name>
    <name evidence="11" type="ordered locus">Os02g0208300</name>
    <name type="ordered locus">LOC_Os02g11760</name>
    <name evidence="9" type="ORF">OJ1003_F05.29-1</name>
    <name evidence="10" type="ORF">OJ1006_A02.12-1</name>
</gene>
<organism>
    <name type="scientific">Oryza sativa subsp. japonica</name>
    <name type="common">Rice</name>
    <dbReference type="NCBI Taxonomy" id="39947"/>
    <lineage>
        <taxon>Eukaryota</taxon>
        <taxon>Viridiplantae</taxon>
        <taxon>Streptophyta</taxon>
        <taxon>Embryophyta</taxon>
        <taxon>Tracheophyta</taxon>
        <taxon>Spermatophyta</taxon>
        <taxon>Magnoliopsida</taxon>
        <taxon>Liliopsida</taxon>
        <taxon>Poales</taxon>
        <taxon>Poaceae</taxon>
        <taxon>BOP clade</taxon>
        <taxon>Oryzoideae</taxon>
        <taxon>Oryzeae</taxon>
        <taxon>Oryzinae</taxon>
        <taxon>Oryza</taxon>
        <taxon>Oryza sativa</taxon>
    </lineage>
</organism>
<evidence type="ECO:0000250" key="1"/>
<evidence type="ECO:0000255" key="2"/>
<evidence type="ECO:0000255" key="3">
    <source>
        <dbReference type="PROSITE-ProRule" id="PRU00434"/>
    </source>
</evidence>
<evidence type="ECO:0000256" key="4">
    <source>
        <dbReference type="SAM" id="MobiDB-lite"/>
    </source>
</evidence>
<evidence type="ECO:0000303" key="5">
    <source>
    </source>
</evidence>
<evidence type="ECO:0000303" key="6">
    <source>
    </source>
</evidence>
<evidence type="ECO:0000303" key="7">
    <source>
    </source>
</evidence>
<evidence type="ECO:0000305" key="8"/>
<evidence type="ECO:0000312" key="9">
    <source>
        <dbReference type="EMBL" id="BAD24998.1"/>
    </source>
</evidence>
<evidence type="ECO:0000312" key="10">
    <source>
        <dbReference type="EMBL" id="BAD25007.1"/>
    </source>
</evidence>
<evidence type="ECO:0000312" key="11">
    <source>
        <dbReference type="EMBL" id="BAF08173.2"/>
    </source>
</evidence>
<dbReference type="EMBL" id="AJ535048">
    <property type="protein sequence ID" value="CAD59570.1"/>
    <property type="molecule type" value="Genomic_DNA"/>
</dbReference>
<dbReference type="EMBL" id="AP003974">
    <property type="protein sequence ID" value="BAD24998.1"/>
    <property type="molecule type" value="Genomic_DNA"/>
</dbReference>
<dbReference type="EMBL" id="AP003977">
    <property type="protein sequence ID" value="BAD25007.1"/>
    <property type="molecule type" value="Genomic_DNA"/>
</dbReference>
<dbReference type="EMBL" id="AP008208">
    <property type="protein sequence ID" value="BAF08173.2"/>
    <property type="status" value="ALT_SEQ"/>
    <property type="molecule type" value="Genomic_DNA"/>
</dbReference>
<dbReference type="EMBL" id="AP014958">
    <property type="status" value="NOT_ANNOTATED_CDS"/>
    <property type="molecule type" value="Genomic_DNA"/>
</dbReference>
<dbReference type="SMR" id="Q8GU88"/>
<dbReference type="FunCoup" id="Q8GU88">
    <property type="interactions" value="85"/>
</dbReference>
<dbReference type="STRING" id="39947.Q8GU88"/>
<dbReference type="PaxDb" id="39947-Q8GU88"/>
<dbReference type="KEGG" id="dosa:Os02g0208300"/>
<dbReference type="InParanoid" id="Q8GU88"/>
<dbReference type="Proteomes" id="UP000000763">
    <property type="component" value="Chromosome 2"/>
</dbReference>
<dbReference type="Proteomes" id="UP000059680">
    <property type="component" value="Chromosome 2"/>
</dbReference>
<dbReference type="GO" id="GO:0016020">
    <property type="term" value="C:membrane"/>
    <property type="evidence" value="ECO:0007669"/>
    <property type="project" value="UniProtKB-SubCell"/>
</dbReference>
<dbReference type="GO" id="GO:0140359">
    <property type="term" value="F:ABC-type transporter activity"/>
    <property type="evidence" value="ECO:0007669"/>
    <property type="project" value="InterPro"/>
</dbReference>
<dbReference type="GO" id="GO:0005524">
    <property type="term" value="F:ATP binding"/>
    <property type="evidence" value="ECO:0007669"/>
    <property type="project" value="UniProtKB-KW"/>
</dbReference>
<dbReference type="GO" id="GO:0016887">
    <property type="term" value="F:ATP hydrolysis activity"/>
    <property type="evidence" value="ECO:0007669"/>
    <property type="project" value="InterPro"/>
</dbReference>
<dbReference type="CDD" id="cd03233">
    <property type="entry name" value="ABCG_PDR_domain1"/>
    <property type="match status" value="1"/>
</dbReference>
<dbReference type="CDD" id="cd03232">
    <property type="entry name" value="ABCG_PDR_domain2"/>
    <property type="match status" value="1"/>
</dbReference>
<dbReference type="FunFam" id="3.40.50.300:FF:000179">
    <property type="entry name" value="ABC transporter G family member 34"/>
    <property type="match status" value="1"/>
</dbReference>
<dbReference type="FunFam" id="3.40.50.300:FF:000059">
    <property type="entry name" value="ABC transporter G family member 40"/>
    <property type="match status" value="1"/>
</dbReference>
<dbReference type="Gene3D" id="3.40.50.300">
    <property type="entry name" value="P-loop containing nucleotide triphosphate hydrolases"/>
    <property type="match status" value="2"/>
</dbReference>
<dbReference type="InterPro" id="IPR003593">
    <property type="entry name" value="AAA+_ATPase"/>
</dbReference>
<dbReference type="InterPro" id="IPR013525">
    <property type="entry name" value="ABC2_TM"/>
</dbReference>
<dbReference type="InterPro" id="IPR029481">
    <property type="entry name" value="ABC_trans_N"/>
</dbReference>
<dbReference type="InterPro" id="IPR003439">
    <property type="entry name" value="ABC_transporter-like_ATP-bd"/>
</dbReference>
<dbReference type="InterPro" id="IPR043926">
    <property type="entry name" value="ABCG_dom"/>
</dbReference>
<dbReference type="InterPro" id="IPR034001">
    <property type="entry name" value="ABCG_PDR_1"/>
</dbReference>
<dbReference type="InterPro" id="IPR034003">
    <property type="entry name" value="ABCG_PDR_2"/>
</dbReference>
<dbReference type="InterPro" id="IPR027417">
    <property type="entry name" value="P-loop_NTPase"/>
</dbReference>
<dbReference type="InterPro" id="IPR013581">
    <property type="entry name" value="PDR_assoc"/>
</dbReference>
<dbReference type="PANTHER" id="PTHR48040:SF35">
    <property type="entry name" value="ABC TRANSPORTER G FAMILY MEMBER 39-LIKE"/>
    <property type="match status" value="1"/>
</dbReference>
<dbReference type="PANTHER" id="PTHR48040">
    <property type="entry name" value="PLEIOTROPIC DRUG RESISTANCE PROTEIN 1-LIKE ISOFORM X1"/>
    <property type="match status" value="1"/>
</dbReference>
<dbReference type="Pfam" id="PF01061">
    <property type="entry name" value="ABC2_membrane"/>
    <property type="match status" value="2"/>
</dbReference>
<dbReference type="Pfam" id="PF19055">
    <property type="entry name" value="ABC2_membrane_7"/>
    <property type="match status" value="1"/>
</dbReference>
<dbReference type="Pfam" id="PF00005">
    <property type="entry name" value="ABC_tran"/>
    <property type="match status" value="2"/>
</dbReference>
<dbReference type="Pfam" id="PF14510">
    <property type="entry name" value="ABC_trans_N"/>
    <property type="match status" value="1"/>
</dbReference>
<dbReference type="Pfam" id="PF08370">
    <property type="entry name" value="PDR_assoc"/>
    <property type="match status" value="1"/>
</dbReference>
<dbReference type="SMART" id="SM00382">
    <property type="entry name" value="AAA"/>
    <property type="match status" value="2"/>
</dbReference>
<dbReference type="SUPFAM" id="SSF52540">
    <property type="entry name" value="P-loop containing nucleoside triphosphate hydrolases"/>
    <property type="match status" value="2"/>
</dbReference>
<dbReference type="PROSITE" id="PS50893">
    <property type="entry name" value="ABC_TRANSPORTER_2"/>
    <property type="match status" value="2"/>
</dbReference>
<sequence>MDIVRMGSVASGGGSVRRTASSWRGTSGRSDAFGRSVREEDDEEALKWAAIEKLPTYDRMRKGILTAGGVEEVDIGGLGLQERRNLIERLVRTAEEDNERFLLKLRDRMERVGIDNPTIEVRFENLSIDAEAYVGNRGIPTFTNFFSNKIMDVLSAMRIVSSGKRPISILHDISGIIRPGRMSLLLGPPGSGKTSLLLALAGKLDSTLKVSGRVTYNGHDMDEFVPQRTSAYIGQHDLHIGEMTVRETLAFSARCQGVGTRYDMLTELSRREKEASIKPDPDIDVYMKAISVEGQESVVTDYILKILGLEICADTMVGDAMIRGISGGQKKRVTTGEMLVGPAKALFMDEISTGLDSSTTYQIVNSLRQSVHILGGTALIALLQPAPETYDLFDDIVLLSEGQIVYQGPRENILEFFEAMGFKCPERKGVADFLQEVTSRKDQHQYWCRRDEPYRYISVNDFSEAFKEFHVGRNLGSELRVPFDRTRNHPAALTTSRYGISKMELTKACFSREWLLMKRNSFVYIFKILQLIILGSIGMTVFLRTKMHRRSVEDGAIFLGAMFLGLVTHLFNGFAELAMSIAKLPIFYKQRDLLFYPSWAYALPTWVLKIPISFLECAVWICMTYYVMGFDPNIERFFRHYVLLVLISQMASGLFRLLAALGREMVVADTFGSFAQLILLVLGGFLISRENIKKWWIWGYWSSPLMYAQNAIAVNEFLGHSWNKVVDPTQSNDTLGVQVLKVRGIFVDANWYWIGVGALLGYIMLFNILFILFLEWLDPLGKGQAVVSEEELREKHVNRTGENVELLTLGTDSQNSPSDANAGRGEITGADTRKRGMVLPFTPLSITFDNIRYSVDMPQEMKDKGVTEDRLLLLKGVSGAFRPGVLTALMGVSGAGKTTLMDVLAGRKTGGYIEGDISISGYPKKQETFARIAGYCEQNDIHSPHVTVYESLLYSAWLRLPSEVDSEARKMFVEEVMELVELTSLRGALVGLPGVNGLSTEQRKRLTIAVELVANPSIIFMDEPTSGLDARAAAIVMRTVRNTVDTGRTVVCTIHQPSIDIFEAFDELFLMKRGGEEIYVGPLGHNSCHLINYFEGIQGVRKIKDGYNPATWMLEVTTLAQEDILGINFAEVYRNSDLYQRNKTLISELSTPPPGSTDLHFPTQFSQPFFTQCMACLWKQHKSYWRNPSYTATRIFFTTVIALIFGTIFLNLGKKINKRLDLFNSLGSMYAAVLFIGIQNGQTVQPIVDVERTVFYREKAAGMYSALPYAFAQVLIEIPHIFLQTVVYGLIVYSLIGFDWTVEKFFWYMFFMFFTFMYFTFYGMMAVAMTPNSDIAAIVSTAFYCIWNIFAGFLIPRPRIPIWWRWYSWACPVAWTLYGLVASQYGDITNSTLEDGEVVQDYIRRYFGFRHDYLGYVATAVVGFAALFAFVFAFSIKVFNFQRR</sequence>
<keyword id="KW-0067">ATP-binding</keyword>
<keyword id="KW-0472">Membrane</keyword>
<keyword id="KW-0547">Nucleotide-binding</keyword>
<keyword id="KW-1185">Reference proteome</keyword>
<keyword id="KW-0677">Repeat</keyword>
<keyword id="KW-0812">Transmembrane</keyword>
<keyword id="KW-1133">Transmembrane helix</keyword>
<keyword id="KW-0813">Transport</keyword>
<feature type="chain" id="PRO_0000234649" description="ABC transporter G family member 39">
    <location>
        <begin position="1"/>
        <end position="1444"/>
    </location>
</feature>
<feature type="transmembrane region" description="Helical" evidence="2">
    <location>
        <begin position="522"/>
        <end position="542"/>
    </location>
</feature>
<feature type="transmembrane region" description="Helical" evidence="2">
    <location>
        <begin position="555"/>
        <end position="575"/>
    </location>
</feature>
<feature type="transmembrane region" description="Helical" evidence="2">
    <location>
        <begin position="610"/>
        <end position="630"/>
    </location>
</feature>
<feature type="transmembrane region" description="Helical" evidence="2">
    <location>
        <begin position="642"/>
        <end position="662"/>
    </location>
</feature>
<feature type="transmembrane region" description="Helical" evidence="2">
    <location>
        <begin position="667"/>
        <end position="687"/>
    </location>
</feature>
<feature type="transmembrane region" description="Helical" evidence="2">
    <location>
        <begin position="754"/>
        <end position="774"/>
    </location>
</feature>
<feature type="transmembrane region" description="Helical" evidence="2">
    <location>
        <begin position="1192"/>
        <end position="1212"/>
    </location>
</feature>
<feature type="transmembrane region" description="Helical" evidence="2">
    <location>
        <begin position="1220"/>
        <end position="1240"/>
    </location>
</feature>
<feature type="transmembrane region" description="Helical" evidence="2">
    <location>
        <begin position="1278"/>
        <end position="1298"/>
    </location>
</feature>
<feature type="transmembrane region" description="Helical" evidence="2">
    <location>
        <begin position="1305"/>
        <end position="1325"/>
    </location>
</feature>
<feature type="transmembrane region" description="Helical" evidence="2">
    <location>
        <begin position="1335"/>
        <end position="1355"/>
    </location>
</feature>
<feature type="transmembrane region" description="Helical" evidence="2">
    <location>
        <begin position="1362"/>
        <end position="1382"/>
    </location>
</feature>
<feature type="transmembrane region" description="Helical" evidence="2">
    <location>
        <begin position="1414"/>
        <end position="1434"/>
    </location>
</feature>
<feature type="domain" description="ABC transporter 1" evidence="3">
    <location>
        <begin position="154"/>
        <end position="426"/>
    </location>
</feature>
<feature type="domain" description="ABC transmembrane type-2 1">
    <location>
        <begin position="504"/>
        <end position="717"/>
    </location>
</feature>
<feature type="domain" description="ABC transporter 2" evidence="3">
    <location>
        <begin position="846"/>
        <end position="1098"/>
    </location>
</feature>
<feature type="domain" description="ABC transmembrane type-2 2">
    <location>
        <begin position="1171"/>
        <end position="1385"/>
    </location>
</feature>
<feature type="region of interest" description="Disordered" evidence="4">
    <location>
        <begin position="1"/>
        <end position="36"/>
    </location>
</feature>
<feature type="compositionally biased region" description="Polar residues" evidence="4">
    <location>
        <begin position="19"/>
        <end position="29"/>
    </location>
</feature>
<feature type="binding site" evidence="3">
    <location>
        <begin position="187"/>
        <end position="194"/>
    </location>
    <ligand>
        <name>ATP</name>
        <dbReference type="ChEBI" id="CHEBI:30616"/>
        <label>1</label>
    </ligand>
</feature>
<feature type="binding site" evidence="3">
    <location>
        <begin position="891"/>
        <end position="898"/>
    </location>
    <ligand>
        <name>ATP</name>
        <dbReference type="ChEBI" id="CHEBI:30616"/>
        <label>2</label>
    </ligand>
</feature>
<accession>Q8GU88</accession>
<accession>Q0E2W5</accession>
<protein>
    <recommendedName>
        <fullName evidence="7">ABC transporter G family member 39</fullName>
        <shortName evidence="7">OsABCG39</shortName>
    </recommendedName>
    <alternativeName>
        <fullName evidence="5 6">Pleiotropic drug resistance protein 7</fullName>
        <shortName evidence="6">OsPDR7</shortName>
    </alternativeName>
</protein>
<name>AB39G_ORYSJ</name>